<evidence type="ECO:0000250" key="1"/>
<evidence type="ECO:0000255" key="2">
    <source>
        <dbReference type="PROSITE-ProRule" id="PRU00691"/>
    </source>
</evidence>
<evidence type="ECO:0000305" key="3"/>
<dbReference type="EMBL" id="AF435817">
    <property type="protein sequence ID" value="AAN63618.1"/>
    <property type="molecule type" value="mRNA"/>
</dbReference>
<dbReference type="EMBL" id="AP008211">
    <property type="protein sequence ID" value="BAF16672.1"/>
    <property type="molecule type" value="Genomic_DNA"/>
</dbReference>
<dbReference type="EMBL" id="AP014961">
    <property type="protein sequence ID" value="BAS92461.1"/>
    <property type="molecule type" value="Genomic_DNA"/>
</dbReference>
<dbReference type="EMBL" id="CM000142">
    <property type="protein sequence ID" value="EEE62475.1"/>
    <property type="molecule type" value="Genomic_DNA"/>
</dbReference>
<dbReference type="EMBL" id="AK060918">
    <property type="protein sequence ID" value="BAG87617.1"/>
    <property type="molecule type" value="mRNA"/>
</dbReference>
<dbReference type="RefSeq" id="XP_015640764.1">
    <property type="nucleotide sequence ID" value="XM_015785278.1"/>
</dbReference>
<dbReference type="SMR" id="Q0DKF1"/>
<dbReference type="FunCoup" id="Q0DKF1">
    <property type="interactions" value="1512"/>
</dbReference>
<dbReference type="STRING" id="39947.Q0DKF1"/>
<dbReference type="PaxDb" id="39947-Q0DKF1"/>
<dbReference type="EnsemblPlants" id="Os05t0169000-01">
    <property type="protein sequence ID" value="Os05t0169000-01"/>
    <property type="gene ID" value="Os05g0169000"/>
</dbReference>
<dbReference type="Gramene" id="Os05t0169000-01">
    <property type="protein sequence ID" value="Os05t0169000-01"/>
    <property type="gene ID" value="Os05g0169000"/>
</dbReference>
<dbReference type="KEGG" id="dosa:Os05g0169000"/>
<dbReference type="eggNOG" id="KOG0907">
    <property type="taxonomic scope" value="Eukaryota"/>
</dbReference>
<dbReference type="HOGENOM" id="CLU_090389_14_1_1"/>
<dbReference type="InParanoid" id="Q0DKF1"/>
<dbReference type="OMA" id="VIDFCAN"/>
<dbReference type="OrthoDB" id="2121326at2759"/>
<dbReference type="Proteomes" id="UP000000763">
    <property type="component" value="Chromosome 5"/>
</dbReference>
<dbReference type="Proteomes" id="UP000007752">
    <property type="component" value="Chromosome 5"/>
</dbReference>
<dbReference type="Proteomes" id="UP000059680">
    <property type="component" value="Chromosome 5"/>
</dbReference>
<dbReference type="ExpressionAtlas" id="Q0DKF1">
    <property type="expression patterns" value="baseline and differential"/>
</dbReference>
<dbReference type="GO" id="GO:0005737">
    <property type="term" value="C:cytoplasm"/>
    <property type="evidence" value="ECO:0007669"/>
    <property type="project" value="UniProtKB-SubCell"/>
</dbReference>
<dbReference type="CDD" id="cd02947">
    <property type="entry name" value="TRX_family"/>
    <property type="match status" value="1"/>
</dbReference>
<dbReference type="FunFam" id="3.40.30.10:FF:000245">
    <property type="entry name" value="Thioredoxin"/>
    <property type="match status" value="1"/>
</dbReference>
<dbReference type="Gene3D" id="3.40.30.10">
    <property type="entry name" value="Glutaredoxin"/>
    <property type="match status" value="1"/>
</dbReference>
<dbReference type="InterPro" id="IPR036249">
    <property type="entry name" value="Thioredoxin-like_sf"/>
</dbReference>
<dbReference type="InterPro" id="IPR017937">
    <property type="entry name" value="Thioredoxin_CS"/>
</dbReference>
<dbReference type="InterPro" id="IPR013766">
    <property type="entry name" value="Thioredoxin_domain"/>
</dbReference>
<dbReference type="InterPro" id="IPR050620">
    <property type="entry name" value="Thioredoxin_H-type-like"/>
</dbReference>
<dbReference type="PANTHER" id="PTHR10438">
    <property type="entry name" value="THIOREDOXIN"/>
    <property type="match status" value="1"/>
</dbReference>
<dbReference type="PANTHER" id="PTHR10438:SF461">
    <property type="entry name" value="THIOREDOXIN H4-2"/>
    <property type="match status" value="1"/>
</dbReference>
<dbReference type="Pfam" id="PF00085">
    <property type="entry name" value="Thioredoxin"/>
    <property type="match status" value="1"/>
</dbReference>
<dbReference type="PRINTS" id="PR00421">
    <property type="entry name" value="THIOREDOXIN"/>
</dbReference>
<dbReference type="SUPFAM" id="SSF52833">
    <property type="entry name" value="Thioredoxin-like"/>
    <property type="match status" value="1"/>
</dbReference>
<dbReference type="PROSITE" id="PS00194">
    <property type="entry name" value="THIOREDOXIN_1"/>
    <property type="match status" value="1"/>
</dbReference>
<dbReference type="PROSITE" id="PS51352">
    <property type="entry name" value="THIOREDOXIN_2"/>
    <property type="match status" value="1"/>
</dbReference>
<reference key="1">
    <citation type="submission" date="2001-10" db="EMBL/GenBank/DDBJ databases">
        <title>The h-class of thioredoxins contains a distinct functional subgroup.</title>
        <authorList>
            <person name="Juttner J."/>
            <person name="Baumann U."/>
        </authorList>
    </citation>
    <scope>NUCLEOTIDE SEQUENCE [MRNA]</scope>
    <source>
        <strain>cv. Amaroo</strain>
    </source>
</reference>
<reference key="2">
    <citation type="journal article" date="2005" name="Nature">
        <title>The map-based sequence of the rice genome.</title>
        <authorList>
            <consortium name="International rice genome sequencing project (IRGSP)"/>
        </authorList>
    </citation>
    <scope>NUCLEOTIDE SEQUENCE [LARGE SCALE GENOMIC DNA]</scope>
    <source>
        <strain>cv. Nipponbare</strain>
    </source>
</reference>
<reference key="3">
    <citation type="journal article" date="2008" name="Nucleic Acids Res.">
        <title>The rice annotation project database (RAP-DB): 2008 update.</title>
        <authorList>
            <consortium name="The rice annotation project (RAP)"/>
        </authorList>
    </citation>
    <scope>GENOME REANNOTATION</scope>
    <source>
        <strain>cv. Nipponbare</strain>
    </source>
</reference>
<reference key="4">
    <citation type="journal article" date="2013" name="Rice">
        <title>Improvement of the Oryza sativa Nipponbare reference genome using next generation sequence and optical map data.</title>
        <authorList>
            <person name="Kawahara Y."/>
            <person name="de la Bastide M."/>
            <person name="Hamilton J.P."/>
            <person name="Kanamori H."/>
            <person name="McCombie W.R."/>
            <person name="Ouyang S."/>
            <person name="Schwartz D.C."/>
            <person name="Tanaka T."/>
            <person name="Wu J."/>
            <person name="Zhou S."/>
            <person name="Childs K.L."/>
            <person name="Davidson R.M."/>
            <person name="Lin H."/>
            <person name="Quesada-Ocampo L."/>
            <person name="Vaillancourt B."/>
            <person name="Sakai H."/>
            <person name="Lee S.S."/>
            <person name="Kim J."/>
            <person name="Numa H."/>
            <person name="Itoh T."/>
            <person name="Buell C.R."/>
            <person name="Matsumoto T."/>
        </authorList>
    </citation>
    <scope>GENOME REANNOTATION</scope>
    <source>
        <strain>cv. Nipponbare</strain>
    </source>
</reference>
<reference key="5">
    <citation type="journal article" date="2005" name="PLoS Biol.">
        <title>The genomes of Oryza sativa: a history of duplications.</title>
        <authorList>
            <person name="Yu J."/>
            <person name="Wang J."/>
            <person name="Lin W."/>
            <person name="Li S."/>
            <person name="Li H."/>
            <person name="Zhou J."/>
            <person name="Ni P."/>
            <person name="Dong W."/>
            <person name="Hu S."/>
            <person name="Zeng C."/>
            <person name="Zhang J."/>
            <person name="Zhang Y."/>
            <person name="Li R."/>
            <person name="Xu Z."/>
            <person name="Li S."/>
            <person name="Li X."/>
            <person name="Zheng H."/>
            <person name="Cong L."/>
            <person name="Lin L."/>
            <person name="Yin J."/>
            <person name="Geng J."/>
            <person name="Li G."/>
            <person name="Shi J."/>
            <person name="Liu J."/>
            <person name="Lv H."/>
            <person name="Li J."/>
            <person name="Wang J."/>
            <person name="Deng Y."/>
            <person name="Ran L."/>
            <person name="Shi X."/>
            <person name="Wang X."/>
            <person name="Wu Q."/>
            <person name="Li C."/>
            <person name="Ren X."/>
            <person name="Wang J."/>
            <person name="Wang X."/>
            <person name="Li D."/>
            <person name="Liu D."/>
            <person name="Zhang X."/>
            <person name="Ji Z."/>
            <person name="Zhao W."/>
            <person name="Sun Y."/>
            <person name="Zhang Z."/>
            <person name="Bao J."/>
            <person name="Han Y."/>
            <person name="Dong L."/>
            <person name="Ji J."/>
            <person name="Chen P."/>
            <person name="Wu S."/>
            <person name="Liu J."/>
            <person name="Xiao Y."/>
            <person name="Bu D."/>
            <person name="Tan J."/>
            <person name="Yang L."/>
            <person name="Ye C."/>
            <person name="Zhang J."/>
            <person name="Xu J."/>
            <person name="Zhou Y."/>
            <person name="Yu Y."/>
            <person name="Zhang B."/>
            <person name="Zhuang S."/>
            <person name="Wei H."/>
            <person name="Liu B."/>
            <person name="Lei M."/>
            <person name="Yu H."/>
            <person name="Li Y."/>
            <person name="Xu H."/>
            <person name="Wei S."/>
            <person name="He X."/>
            <person name="Fang L."/>
            <person name="Zhang Z."/>
            <person name="Zhang Y."/>
            <person name="Huang X."/>
            <person name="Su Z."/>
            <person name="Tong W."/>
            <person name="Li J."/>
            <person name="Tong Z."/>
            <person name="Li S."/>
            <person name="Ye J."/>
            <person name="Wang L."/>
            <person name="Fang L."/>
            <person name="Lei T."/>
            <person name="Chen C.-S."/>
            <person name="Chen H.-C."/>
            <person name="Xu Z."/>
            <person name="Li H."/>
            <person name="Huang H."/>
            <person name="Zhang F."/>
            <person name="Xu H."/>
            <person name="Li N."/>
            <person name="Zhao C."/>
            <person name="Li S."/>
            <person name="Dong L."/>
            <person name="Huang Y."/>
            <person name="Li L."/>
            <person name="Xi Y."/>
            <person name="Qi Q."/>
            <person name="Li W."/>
            <person name="Zhang B."/>
            <person name="Hu W."/>
            <person name="Zhang Y."/>
            <person name="Tian X."/>
            <person name="Jiao Y."/>
            <person name="Liang X."/>
            <person name="Jin J."/>
            <person name="Gao L."/>
            <person name="Zheng W."/>
            <person name="Hao B."/>
            <person name="Liu S.-M."/>
            <person name="Wang W."/>
            <person name="Yuan L."/>
            <person name="Cao M."/>
            <person name="McDermott J."/>
            <person name="Samudrala R."/>
            <person name="Wang J."/>
            <person name="Wong G.K.-S."/>
            <person name="Yang H."/>
        </authorList>
    </citation>
    <scope>NUCLEOTIDE SEQUENCE [LARGE SCALE GENOMIC DNA]</scope>
    <source>
        <strain>cv. Nipponbare</strain>
    </source>
</reference>
<reference key="6">
    <citation type="journal article" date="2003" name="Science">
        <title>Collection, mapping, and annotation of over 28,000 cDNA clones from japonica rice.</title>
        <authorList>
            <consortium name="The rice full-length cDNA consortium"/>
        </authorList>
    </citation>
    <scope>NUCLEOTIDE SEQUENCE [LARGE SCALE MRNA]</scope>
    <source>
        <strain>cv. Nipponbare</strain>
    </source>
</reference>
<reference key="7">
    <citation type="journal article" date="2009" name="Mol. Plant">
        <title>Comparative genomic study of the thioredoxin family in photosynthetic organisms with emphasis on Populus trichocarpa.</title>
        <authorList>
            <person name="Chibani K."/>
            <person name="Wingsle G."/>
            <person name="Jacquot J.P."/>
            <person name="Gelhaye E."/>
            <person name="Rouhier N."/>
        </authorList>
    </citation>
    <scope>GENE FAMILY</scope>
    <scope>NOMENCLATURE</scope>
</reference>
<name>TRH42_ORYSJ</name>
<organism>
    <name type="scientific">Oryza sativa subsp. japonica</name>
    <name type="common">Rice</name>
    <dbReference type="NCBI Taxonomy" id="39947"/>
    <lineage>
        <taxon>Eukaryota</taxon>
        <taxon>Viridiplantae</taxon>
        <taxon>Streptophyta</taxon>
        <taxon>Embryophyta</taxon>
        <taxon>Tracheophyta</taxon>
        <taxon>Spermatophyta</taxon>
        <taxon>Magnoliopsida</taxon>
        <taxon>Liliopsida</taxon>
        <taxon>Poales</taxon>
        <taxon>Poaceae</taxon>
        <taxon>BOP clade</taxon>
        <taxon>Oryzoideae</taxon>
        <taxon>Oryzeae</taxon>
        <taxon>Oryzinae</taxon>
        <taxon>Oryza</taxon>
        <taxon>Oryza sativa</taxon>
    </lineage>
</organism>
<proteinExistence type="evidence at transcript level"/>
<feature type="chain" id="PRO_0000394829" description="Thioredoxin H4-2">
    <location>
        <begin position="1"/>
        <end position="132"/>
    </location>
</feature>
<feature type="domain" description="Thioredoxin" evidence="2">
    <location>
        <begin position="18"/>
        <end position="130"/>
    </location>
</feature>
<feature type="active site" description="Nucleophile" evidence="1">
    <location>
        <position position="56"/>
    </location>
</feature>
<feature type="active site" description="Nucleophile" evidence="1">
    <location>
        <position position="59"/>
    </location>
</feature>
<feature type="site" description="Contributes to redox potential value" evidence="1">
    <location>
        <position position="57"/>
    </location>
</feature>
<feature type="site" description="Contributes to redox potential value" evidence="1">
    <location>
        <position position="58"/>
    </location>
</feature>
<feature type="disulfide bond" description="Redox-active" evidence="2">
    <location>
        <begin position="56"/>
        <end position="59"/>
    </location>
</feature>
<feature type="sequence conflict" description="In Ref. 1; AAN63618." evidence="3" ref="1">
    <original>T</original>
    <variation>K</variation>
    <location>
        <position position="98"/>
    </location>
</feature>
<accession>Q0DKF1</accession>
<accession>A0A0P0WIJ4</accession>
<accession>Q8H6X4</accession>
<comment type="function">
    <text>Probable thiol-disulfide oxidoreductase that may be involved in the redox regulation of a number of cytosolic enzymes.</text>
</comment>
<comment type="subcellular location">
    <subcellularLocation>
        <location evidence="1">Cytoplasm</location>
    </subcellularLocation>
</comment>
<comment type="similarity">
    <text evidence="3">Belongs to the thioredoxin family. Plant H-type subfamily.</text>
</comment>
<keyword id="KW-0963">Cytoplasm</keyword>
<keyword id="KW-1015">Disulfide bond</keyword>
<keyword id="KW-0249">Electron transport</keyword>
<keyword id="KW-0676">Redox-active center</keyword>
<keyword id="KW-1185">Reference proteome</keyword>
<keyword id="KW-0813">Transport</keyword>
<gene>
    <name type="ordered locus">Os05g0169000</name>
    <name type="ordered locus">LOC_Os05g07690</name>
    <name type="ORF">OsJ_17272</name>
</gene>
<protein>
    <recommendedName>
        <fullName>Thioredoxin H4-2</fullName>
        <shortName>OsTrxh4-2</shortName>
    </recommendedName>
    <alternativeName>
        <fullName>OsTrx18</fullName>
    </alternativeName>
</protein>
<sequence length="132" mass="14815">MGGCVGKGRRHIEEDKLDFKGGNVHVITSKEDWDRKIEEANKDGKIVVANFSASWCGPCRVIAPIYAEMSKTYPQLMFLTIDVDDLMDFSSSWDIRATPTFFFIKNEKQVDKLVGANKPELEKKVQALADGS</sequence>